<reference key="1">
    <citation type="journal article" date="2005" name="J. Bacteriol.">
        <title>Insights into genome plasticity and pathogenicity of the plant pathogenic Bacterium Xanthomonas campestris pv. vesicatoria revealed by the complete genome sequence.</title>
        <authorList>
            <person name="Thieme F."/>
            <person name="Koebnik R."/>
            <person name="Bekel T."/>
            <person name="Berger C."/>
            <person name="Boch J."/>
            <person name="Buettner D."/>
            <person name="Caldana C."/>
            <person name="Gaigalat L."/>
            <person name="Goesmann A."/>
            <person name="Kay S."/>
            <person name="Kirchner O."/>
            <person name="Lanz C."/>
            <person name="Linke B."/>
            <person name="McHardy A.C."/>
            <person name="Meyer F."/>
            <person name="Mittenhuber G."/>
            <person name="Nies D.H."/>
            <person name="Niesbach-Kloesgen U."/>
            <person name="Patschkowski T."/>
            <person name="Rueckert C."/>
            <person name="Rupp O."/>
            <person name="Schneiker S."/>
            <person name="Schuster S.C."/>
            <person name="Vorhoelter F.J."/>
            <person name="Weber E."/>
            <person name="Puehler A."/>
            <person name="Bonas U."/>
            <person name="Bartels D."/>
            <person name="Kaiser O."/>
        </authorList>
    </citation>
    <scope>NUCLEOTIDE SEQUENCE [LARGE SCALE GENOMIC DNA]</scope>
    <source>
        <strain>85-10</strain>
    </source>
</reference>
<keyword id="KW-0030">Aminoacyl-tRNA synthetase</keyword>
<keyword id="KW-0067">ATP-binding</keyword>
<keyword id="KW-0175">Coiled coil</keyword>
<keyword id="KW-0963">Cytoplasm</keyword>
<keyword id="KW-0436">Ligase</keyword>
<keyword id="KW-0547">Nucleotide-binding</keyword>
<keyword id="KW-0648">Protein biosynthesis</keyword>
<protein>
    <recommendedName>
        <fullName evidence="1">Valine--tRNA ligase</fullName>
        <ecNumber evidence="1">6.1.1.9</ecNumber>
    </recommendedName>
    <alternativeName>
        <fullName evidence="1">Valyl-tRNA synthetase</fullName>
        <shortName evidence="1">ValRS</shortName>
    </alternativeName>
</protein>
<feature type="chain" id="PRO_0000224601" description="Valine--tRNA ligase">
    <location>
        <begin position="1"/>
        <end position="980"/>
    </location>
</feature>
<feature type="coiled-coil region" evidence="1">
    <location>
        <begin position="914"/>
        <end position="978"/>
    </location>
</feature>
<feature type="short sequence motif" description="'HIGH' region">
    <location>
        <begin position="43"/>
        <end position="53"/>
    </location>
</feature>
<feature type="short sequence motif" description="'KMSKS' region">
    <location>
        <begin position="586"/>
        <end position="590"/>
    </location>
</feature>
<feature type="binding site" evidence="1">
    <location>
        <position position="589"/>
    </location>
    <ligand>
        <name>ATP</name>
        <dbReference type="ChEBI" id="CHEBI:30616"/>
    </ligand>
</feature>
<evidence type="ECO:0000255" key="1">
    <source>
        <dbReference type="HAMAP-Rule" id="MF_02004"/>
    </source>
</evidence>
<organism>
    <name type="scientific">Xanthomonas euvesicatoria pv. vesicatoria (strain 85-10)</name>
    <name type="common">Xanthomonas campestris pv. vesicatoria</name>
    <dbReference type="NCBI Taxonomy" id="316273"/>
    <lineage>
        <taxon>Bacteria</taxon>
        <taxon>Pseudomonadati</taxon>
        <taxon>Pseudomonadota</taxon>
        <taxon>Gammaproteobacteria</taxon>
        <taxon>Lysobacterales</taxon>
        <taxon>Lysobacteraceae</taxon>
        <taxon>Xanthomonas</taxon>
    </lineage>
</organism>
<accession>Q3BP98</accession>
<dbReference type="EC" id="6.1.1.9" evidence="1"/>
<dbReference type="EMBL" id="AM039952">
    <property type="protein sequence ID" value="CAJ25415.1"/>
    <property type="molecule type" value="Genomic_DNA"/>
</dbReference>
<dbReference type="RefSeq" id="WP_011348594.1">
    <property type="nucleotide sequence ID" value="NZ_CP017190.1"/>
</dbReference>
<dbReference type="SMR" id="Q3BP98"/>
<dbReference type="STRING" id="456327.BJD11_04260"/>
<dbReference type="KEGG" id="xcv:XCV3684"/>
<dbReference type="eggNOG" id="COG0525">
    <property type="taxonomic scope" value="Bacteria"/>
</dbReference>
<dbReference type="HOGENOM" id="CLU_001493_0_2_6"/>
<dbReference type="Proteomes" id="UP000007069">
    <property type="component" value="Chromosome"/>
</dbReference>
<dbReference type="GO" id="GO:0005829">
    <property type="term" value="C:cytosol"/>
    <property type="evidence" value="ECO:0007669"/>
    <property type="project" value="TreeGrafter"/>
</dbReference>
<dbReference type="GO" id="GO:0002161">
    <property type="term" value="F:aminoacyl-tRNA deacylase activity"/>
    <property type="evidence" value="ECO:0007669"/>
    <property type="project" value="InterPro"/>
</dbReference>
<dbReference type="GO" id="GO:0005524">
    <property type="term" value="F:ATP binding"/>
    <property type="evidence" value="ECO:0007669"/>
    <property type="project" value="UniProtKB-UniRule"/>
</dbReference>
<dbReference type="GO" id="GO:0004832">
    <property type="term" value="F:valine-tRNA ligase activity"/>
    <property type="evidence" value="ECO:0007669"/>
    <property type="project" value="UniProtKB-UniRule"/>
</dbReference>
<dbReference type="GO" id="GO:0006438">
    <property type="term" value="P:valyl-tRNA aminoacylation"/>
    <property type="evidence" value="ECO:0007669"/>
    <property type="project" value="UniProtKB-UniRule"/>
</dbReference>
<dbReference type="CDD" id="cd07962">
    <property type="entry name" value="Anticodon_Ia_Val"/>
    <property type="match status" value="1"/>
</dbReference>
<dbReference type="FunFam" id="1.10.287.380:FF:000001">
    <property type="entry name" value="Valine--tRNA ligase"/>
    <property type="match status" value="1"/>
</dbReference>
<dbReference type="FunFam" id="3.40.50.620:FF:000032">
    <property type="entry name" value="Valine--tRNA ligase"/>
    <property type="match status" value="1"/>
</dbReference>
<dbReference type="FunFam" id="3.40.50.620:FF:000098">
    <property type="entry name" value="Valine--tRNA ligase"/>
    <property type="match status" value="1"/>
</dbReference>
<dbReference type="Gene3D" id="3.40.50.620">
    <property type="entry name" value="HUPs"/>
    <property type="match status" value="2"/>
</dbReference>
<dbReference type="Gene3D" id="1.10.730.10">
    <property type="entry name" value="Isoleucyl-tRNA Synthetase, Domain 1"/>
    <property type="match status" value="1"/>
</dbReference>
<dbReference type="Gene3D" id="1.10.287.380">
    <property type="entry name" value="Valyl-tRNA synthetase, C-terminal domain"/>
    <property type="match status" value="1"/>
</dbReference>
<dbReference type="Gene3D" id="3.90.740.10">
    <property type="entry name" value="Valyl/Leucyl/Isoleucyl-tRNA synthetase, editing domain"/>
    <property type="match status" value="2"/>
</dbReference>
<dbReference type="HAMAP" id="MF_02004">
    <property type="entry name" value="Val_tRNA_synth_type1"/>
    <property type="match status" value="1"/>
</dbReference>
<dbReference type="InterPro" id="IPR001412">
    <property type="entry name" value="aa-tRNA-synth_I_CS"/>
</dbReference>
<dbReference type="InterPro" id="IPR002300">
    <property type="entry name" value="aa-tRNA-synth_Ia"/>
</dbReference>
<dbReference type="InterPro" id="IPR033705">
    <property type="entry name" value="Anticodon_Ia_Val"/>
</dbReference>
<dbReference type="InterPro" id="IPR013155">
    <property type="entry name" value="M/V/L/I-tRNA-synth_anticd-bd"/>
</dbReference>
<dbReference type="InterPro" id="IPR014729">
    <property type="entry name" value="Rossmann-like_a/b/a_fold"/>
</dbReference>
<dbReference type="InterPro" id="IPR010978">
    <property type="entry name" value="tRNA-bd_arm"/>
</dbReference>
<dbReference type="InterPro" id="IPR009080">
    <property type="entry name" value="tRNAsynth_Ia_anticodon-bd"/>
</dbReference>
<dbReference type="InterPro" id="IPR037118">
    <property type="entry name" value="Val-tRNA_synth_C_sf"/>
</dbReference>
<dbReference type="InterPro" id="IPR019499">
    <property type="entry name" value="Val-tRNA_synth_tRNA-bd"/>
</dbReference>
<dbReference type="InterPro" id="IPR009008">
    <property type="entry name" value="Val/Leu/Ile-tRNA-synth_edit"/>
</dbReference>
<dbReference type="InterPro" id="IPR002303">
    <property type="entry name" value="Valyl-tRNA_ligase"/>
</dbReference>
<dbReference type="NCBIfam" id="NF004349">
    <property type="entry name" value="PRK05729.1"/>
    <property type="match status" value="1"/>
</dbReference>
<dbReference type="NCBIfam" id="TIGR00422">
    <property type="entry name" value="valS"/>
    <property type="match status" value="1"/>
</dbReference>
<dbReference type="PANTHER" id="PTHR11946:SF93">
    <property type="entry name" value="VALINE--TRNA LIGASE, CHLOROPLASTIC_MITOCHONDRIAL 2"/>
    <property type="match status" value="1"/>
</dbReference>
<dbReference type="PANTHER" id="PTHR11946">
    <property type="entry name" value="VALYL-TRNA SYNTHETASES"/>
    <property type="match status" value="1"/>
</dbReference>
<dbReference type="Pfam" id="PF08264">
    <property type="entry name" value="Anticodon_1"/>
    <property type="match status" value="1"/>
</dbReference>
<dbReference type="Pfam" id="PF00133">
    <property type="entry name" value="tRNA-synt_1"/>
    <property type="match status" value="1"/>
</dbReference>
<dbReference type="Pfam" id="PF10458">
    <property type="entry name" value="Val_tRNA-synt_C"/>
    <property type="match status" value="1"/>
</dbReference>
<dbReference type="PRINTS" id="PR00986">
    <property type="entry name" value="TRNASYNTHVAL"/>
</dbReference>
<dbReference type="SUPFAM" id="SSF47323">
    <property type="entry name" value="Anticodon-binding domain of a subclass of class I aminoacyl-tRNA synthetases"/>
    <property type="match status" value="1"/>
</dbReference>
<dbReference type="SUPFAM" id="SSF52374">
    <property type="entry name" value="Nucleotidylyl transferase"/>
    <property type="match status" value="1"/>
</dbReference>
<dbReference type="SUPFAM" id="SSF46589">
    <property type="entry name" value="tRNA-binding arm"/>
    <property type="match status" value="1"/>
</dbReference>
<dbReference type="SUPFAM" id="SSF50677">
    <property type="entry name" value="ValRS/IleRS/LeuRS editing domain"/>
    <property type="match status" value="1"/>
</dbReference>
<dbReference type="PROSITE" id="PS00178">
    <property type="entry name" value="AA_TRNA_LIGASE_I"/>
    <property type="match status" value="1"/>
</dbReference>
<proteinExistence type="inferred from homology"/>
<name>SYV_XANE5</name>
<comment type="function">
    <text evidence="1">Catalyzes the attachment of valine to tRNA(Val). As ValRS can inadvertently accommodate and process structurally similar amino acids such as threonine, to avoid such errors, it has a 'posttransfer' editing activity that hydrolyzes mischarged Thr-tRNA(Val) in a tRNA-dependent manner.</text>
</comment>
<comment type="catalytic activity">
    <reaction evidence="1">
        <text>tRNA(Val) + L-valine + ATP = L-valyl-tRNA(Val) + AMP + diphosphate</text>
        <dbReference type="Rhea" id="RHEA:10704"/>
        <dbReference type="Rhea" id="RHEA-COMP:9672"/>
        <dbReference type="Rhea" id="RHEA-COMP:9708"/>
        <dbReference type="ChEBI" id="CHEBI:30616"/>
        <dbReference type="ChEBI" id="CHEBI:33019"/>
        <dbReference type="ChEBI" id="CHEBI:57762"/>
        <dbReference type="ChEBI" id="CHEBI:78442"/>
        <dbReference type="ChEBI" id="CHEBI:78537"/>
        <dbReference type="ChEBI" id="CHEBI:456215"/>
        <dbReference type="EC" id="6.1.1.9"/>
    </reaction>
</comment>
<comment type="subunit">
    <text evidence="1">Monomer.</text>
</comment>
<comment type="subcellular location">
    <subcellularLocation>
        <location evidence="1">Cytoplasm</location>
    </subcellularLocation>
</comment>
<comment type="domain">
    <text evidence="1">ValRS has two distinct active sites: one for aminoacylation and one for editing. The misactivated threonine is translocated from the active site to the editing site.</text>
</comment>
<comment type="domain">
    <text evidence="1">The C-terminal coiled-coil domain is crucial for aminoacylation activity.</text>
</comment>
<comment type="similarity">
    <text evidence="1">Belongs to the class-I aminoacyl-tRNA synthetase family. ValS type 1 subfamily.</text>
</comment>
<gene>
    <name evidence="1" type="primary">valS</name>
    <name type="ordered locus">XCV3684</name>
</gene>
<sequence length="980" mass="110988">MTTLASSYDPSSFESRLYAQWEAAGYFVPSGKGEPYTVLLPPPNVTGTLHMGHAFQQTLMDALVRYHRMRGYDTLWQVGTDHAGIATEMVVSRNLALEGKGQTRDSLGREGFIAKVWEWKAESGDTIERQMRRLGTSSDWSRSTFTMDPQPSAAVNEAFVRWYEQGLIYRGQRLVNWDPVLKTAISDLEVENVEEDGFLWSIRYPLADGVSYEHVEHDADGNETLRETRDYLVVATTRPETMLGDTAVMVHPEDARYLTLHDARIVLPLTGRHVPVITDDYVDRAFGTGVVKVTPAHDFNDYQVGERHNLPLVNLFTVDAKIIDPREQYPDDEYPVVDQGIDWRELNQVQRRRTGQHFAYSIPSAYVGLDRYEARKLVLAHLEDEGRLVETKPHKLQVPRGDRTGQVIEPYLTDQWFVKMDALAKRGLELVESGQIKFVPPNWINTYRHWMENIQDWCISRQLWWGHRIPAWFDEAGTCYVGHDEAEVRAKHGLGADVALHQDSDVLETWFSSQLWPFSTLGWPDAQAMAERGFARYLPSSVLVTGFDIIFFWVARMIMATDSFTGQVPFRDVYITGLIRDAQGQKMSKSKGNVLDPLDIIDGISIEDLVAKRTHGLMQPRMAEKIEKATRKEFPDGIIVHGADALRFTIAALATHGRDIKFDLGRAEGYKNFCNKLWNATRFVLMNTEGARFTGVPQPRTEAEKWILARLDKATAETHAHYANYRFDLLAQSLYEFAWNAFCDWFVELAKPALNNQDADAAASTRHTLLYVLESLLRLLHPLTPFVTEELWQQVAPRLGITTATISLQSFPQPGDVDTSSYATAEADVEWLKSMVSALRRVRSELNVPPSKQVRLLLQADTADDRPRVARLASQLSFLLKLERIDWLDAGQDTPPSAAAIVGELTLLVPLEGLVDMDAERTRLDKEIKRVEGEIAKCNGKLGSATFVQNAPAAVVEQERARLNDWTTQLTGLREQRAKI</sequence>